<reference key="1">
    <citation type="submission" date="2006-12" db="EMBL/GenBank/DDBJ databases">
        <authorList>
            <person name="Hendrix L."/>
            <person name="Mohamoud Y."/>
            <person name="Radune D."/>
            <person name="Shvartsbeyn A."/>
            <person name="Daugherty S."/>
            <person name="Dodson R."/>
            <person name="Durkin A.S."/>
            <person name="Harkins D."/>
            <person name="Huot H."/>
            <person name="Kothari S.P."/>
            <person name="Madupu R."/>
            <person name="Li J."/>
            <person name="Nelson W.C."/>
            <person name="Shrivastava S."/>
            <person name="Giglio M.G."/>
            <person name="Haft D."/>
            <person name="Selengut J."/>
            <person name="Fraser-Ligget C."/>
            <person name="Seshadri R."/>
        </authorList>
    </citation>
    <scope>NUCLEOTIDE SEQUENCE [LARGE SCALE GENOMIC DNA]</scope>
    <source>
        <strain>ATCC 35685 / KC583 / Herrer 020/F12,63</strain>
    </source>
</reference>
<name>RL5_BARBK</name>
<organism>
    <name type="scientific">Bartonella bacilliformis (strain ATCC 35685 / KC583 / Herrer 020/F12,63)</name>
    <dbReference type="NCBI Taxonomy" id="360095"/>
    <lineage>
        <taxon>Bacteria</taxon>
        <taxon>Pseudomonadati</taxon>
        <taxon>Pseudomonadota</taxon>
        <taxon>Alphaproteobacteria</taxon>
        <taxon>Hyphomicrobiales</taxon>
        <taxon>Bartonellaceae</taxon>
        <taxon>Bartonella</taxon>
    </lineage>
</organism>
<gene>
    <name evidence="1" type="primary">rplE</name>
    <name type="ordered locus">BARBAKC583_0710</name>
</gene>
<comment type="function">
    <text evidence="1">This is one of the proteins that bind and probably mediate the attachment of the 5S RNA into the large ribosomal subunit, where it forms part of the central protuberance. In the 70S ribosome it contacts protein S13 of the 30S subunit (bridge B1b), connecting the 2 subunits; this bridge is implicated in subunit movement. Contacts the P site tRNA; the 5S rRNA and some of its associated proteins might help stabilize positioning of ribosome-bound tRNAs.</text>
</comment>
<comment type="subunit">
    <text evidence="1">Part of the 50S ribosomal subunit; part of the 5S rRNA/L5/L18/L25 subcomplex. Contacts the 5S rRNA and the P site tRNA. Forms a bridge to the 30S subunit in the 70S ribosome.</text>
</comment>
<comment type="similarity">
    <text evidence="1">Belongs to the universal ribosomal protein uL5 family.</text>
</comment>
<dbReference type="EMBL" id="CP000524">
    <property type="protein sequence ID" value="ABM44749.1"/>
    <property type="molecule type" value="Genomic_DNA"/>
</dbReference>
<dbReference type="RefSeq" id="WP_005766936.1">
    <property type="nucleotide sequence ID" value="NC_008783.1"/>
</dbReference>
<dbReference type="SMR" id="A1USQ6"/>
<dbReference type="STRING" id="360095.BARBAKC583_0710"/>
<dbReference type="GeneID" id="4684251"/>
<dbReference type="KEGG" id="bbk:BARBAKC583_0710"/>
<dbReference type="PATRIC" id="fig|360095.6.peg.689"/>
<dbReference type="eggNOG" id="COG0094">
    <property type="taxonomic scope" value="Bacteria"/>
</dbReference>
<dbReference type="HOGENOM" id="CLU_061015_2_1_5"/>
<dbReference type="OrthoDB" id="9806626at2"/>
<dbReference type="Proteomes" id="UP000000643">
    <property type="component" value="Chromosome"/>
</dbReference>
<dbReference type="GO" id="GO:1990904">
    <property type="term" value="C:ribonucleoprotein complex"/>
    <property type="evidence" value="ECO:0007669"/>
    <property type="project" value="UniProtKB-KW"/>
</dbReference>
<dbReference type="GO" id="GO:0005840">
    <property type="term" value="C:ribosome"/>
    <property type="evidence" value="ECO:0007669"/>
    <property type="project" value="UniProtKB-KW"/>
</dbReference>
<dbReference type="GO" id="GO:0019843">
    <property type="term" value="F:rRNA binding"/>
    <property type="evidence" value="ECO:0007669"/>
    <property type="project" value="UniProtKB-UniRule"/>
</dbReference>
<dbReference type="GO" id="GO:0003735">
    <property type="term" value="F:structural constituent of ribosome"/>
    <property type="evidence" value="ECO:0007669"/>
    <property type="project" value="InterPro"/>
</dbReference>
<dbReference type="GO" id="GO:0000049">
    <property type="term" value="F:tRNA binding"/>
    <property type="evidence" value="ECO:0007669"/>
    <property type="project" value="UniProtKB-UniRule"/>
</dbReference>
<dbReference type="GO" id="GO:0006412">
    <property type="term" value="P:translation"/>
    <property type="evidence" value="ECO:0007669"/>
    <property type="project" value="UniProtKB-UniRule"/>
</dbReference>
<dbReference type="FunFam" id="3.30.1440.10:FF:000001">
    <property type="entry name" value="50S ribosomal protein L5"/>
    <property type="match status" value="1"/>
</dbReference>
<dbReference type="Gene3D" id="3.30.1440.10">
    <property type="match status" value="1"/>
</dbReference>
<dbReference type="HAMAP" id="MF_01333_B">
    <property type="entry name" value="Ribosomal_uL5_B"/>
    <property type="match status" value="1"/>
</dbReference>
<dbReference type="InterPro" id="IPR002132">
    <property type="entry name" value="Ribosomal_uL5"/>
</dbReference>
<dbReference type="InterPro" id="IPR020930">
    <property type="entry name" value="Ribosomal_uL5_bac-type"/>
</dbReference>
<dbReference type="InterPro" id="IPR031309">
    <property type="entry name" value="Ribosomal_uL5_C"/>
</dbReference>
<dbReference type="InterPro" id="IPR022803">
    <property type="entry name" value="Ribosomal_uL5_dom_sf"/>
</dbReference>
<dbReference type="InterPro" id="IPR031310">
    <property type="entry name" value="Ribosomal_uL5_N"/>
</dbReference>
<dbReference type="NCBIfam" id="NF000585">
    <property type="entry name" value="PRK00010.1"/>
    <property type="match status" value="1"/>
</dbReference>
<dbReference type="PANTHER" id="PTHR11994">
    <property type="entry name" value="60S RIBOSOMAL PROTEIN L11-RELATED"/>
    <property type="match status" value="1"/>
</dbReference>
<dbReference type="Pfam" id="PF00281">
    <property type="entry name" value="Ribosomal_L5"/>
    <property type="match status" value="1"/>
</dbReference>
<dbReference type="Pfam" id="PF00673">
    <property type="entry name" value="Ribosomal_L5_C"/>
    <property type="match status" value="1"/>
</dbReference>
<dbReference type="PIRSF" id="PIRSF002161">
    <property type="entry name" value="Ribosomal_L5"/>
    <property type="match status" value="1"/>
</dbReference>
<dbReference type="SUPFAM" id="SSF55282">
    <property type="entry name" value="RL5-like"/>
    <property type="match status" value="1"/>
</dbReference>
<keyword id="KW-0687">Ribonucleoprotein</keyword>
<keyword id="KW-0689">Ribosomal protein</keyword>
<keyword id="KW-0694">RNA-binding</keyword>
<keyword id="KW-0699">rRNA-binding</keyword>
<keyword id="KW-0820">tRNA-binding</keyword>
<evidence type="ECO:0000255" key="1">
    <source>
        <dbReference type="HAMAP-Rule" id="MF_01333"/>
    </source>
</evidence>
<evidence type="ECO:0000305" key="2"/>
<sequence length="185" mass="21011">MAEEKQKPRMKVHYVGVIRKILQEKFHYKNEMQIPRVDKIVINMGIGEATSDSKKPSIAAGDLSLITGQKAVVTYASSSIAGFKVREGMPLGAKVTLRKDRMFEFLDRLVTIALPRVRDFRGLNPKSFDGRGNFAMGIKEHIVFPEINYDKVDQIWGMDIIVCTTAKTDDEARELLRAFNFPFRS</sequence>
<accession>A1USQ6</accession>
<feature type="chain" id="PRO_1000052693" description="Large ribosomal subunit protein uL5">
    <location>
        <begin position="1"/>
        <end position="185"/>
    </location>
</feature>
<protein>
    <recommendedName>
        <fullName evidence="1">Large ribosomal subunit protein uL5</fullName>
    </recommendedName>
    <alternativeName>
        <fullName evidence="2">50S ribosomal protein L5</fullName>
    </alternativeName>
</protein>
<proteinExistence type="inferred from homology"/>